<accession>A5DAH9</accession>
<comment type="function">
    <text evidence="1">Catalyzes the phosphorylation of riboflavin (vitamin B2) to form flavin mononucleotide (FMN) coenzyme.</text>
</comment>
<comment type="catalytic activity">
    <reaction>
        <text>riboflavin + ATP = FMN + ADP + H(+)</text>
        <dbReference type="Rhea" id="RHEA:14357"/>
        <dbReference type="ChEBI" id="CHEBI:15378"/>
        <dbReference type="ChEBI" id="CHEBI:30616"/>
        <dbReference type="ChEBI" id="CHEBI:57986"/>
        <dbReference type="ChEBI" id="CHEBI:58210"/>
        <dbReference type="ChEBI" id="CHEBI:456216"/>
        <dbReference type="EC" id="2.7.1.26"/>
    </reaction>
</comment>
<comment type="cofactor">
    <cofactor evidence="1">
        <name>Zn(2+)</name>
        <dbReference type="ChEBI" id="CHEBI:29105"/>
    </cofactor>
    <cofactor evidence="1">
        <name>Mg(2+)</name>
        <dbReference type="ChEBI" id="CHEBI:18420"/>
    </cofactor>
    <text evidence="1">Zinc or magnesium.</text>
</comment>
<comment type="pathway">
    <text>Cofactor biosynthesis; FMN biosynthesis; FMN from riboflavin (ATP route): step 1/1.</text>
</comment>
<comment type="similarity">
    <text evidence="3">Belongs to the flavokinase family.</text>
</comment>
<evidence type="ECO:0000250" key="1"/>
<evidence type="ECO:0000250" key="2">
    <source>
        <dbReference type="UniProtKB" id="Q969G6"/>
    </source>
</evidence>
<evidence type="ECO:0000305" key="3"/>
<name>RIFK_PICGU</name>
<organism>
    <name type="scientific">Meyerozyma guilliermondii (strain ATCC 6260 / CBS 566 / DSM 6381 / JCM 1539 / NBRC 10279 / NRRL Y-324)</name>
    <name type="common">Yeast</name>
    <name type="synonym">Candida guilliermondii</name>
    <dbReference type="NCBI Taxonomy" id="294746"/>
    <lineage>
        <taxon>Eukaryota</taxon>
        <taxon>Fungi</taxon>
        <taxon>Dikarya</taxon>
        <taxon>Ascomycota</taxon>
        <taxon>Saccharomycotina</taxon>
        <taxon>Pichiomycetes</taxon>
        <taxon>Debaryomycetaceae</taxon>
        <taxon>Meyerozyma</taxon>
    </lineage>
</organism>
<proteinExistence type="inferred from homology"/>
<sequence length="180" mass="20331">MTSRPETKIPDEITSPYPIIGAGTIESGFGRGSAELGIPTANIPVTSELNKLETGIYYGWCRLVPRNQECAAKQRSDGKKVYFNNGTKLADDELETFPMAMSIGWNPFYNNETKTAEVHIIHKFRENFYGADLRYAVMGHIRPELNYTTKEALIADINKDIEITKDALSKPSYEKYRTKI</sequence>
<gene>
    <name type="primary">FMN1</name>
    <name type="ORF">PGUG_00284</name>
</gene>
<keyword id="KW-0067">ATP-binding</keyword>
<keyword id="KW-0285">Flavoprotein</keyword>
<keyword id="KW-0288">FMN</keyword>
<keyword id="KW-0418">Kinase</keyword>
<keyword id="KW-0460">Magnesium</keyword>
<keyword id="KW-0479">Metal-binding</keyword>
<keyword id="KW-0547">Nucleotide-binding</keyword>
<keyword id="KW-1185">Reference proteome</keyword>
<keyword id="KW-0808">Transferase</keyword>
<keyword id="KW-0862">Zinc</keyword>
<feature type="chain" id="PRO_0000301848" description="Riboflavin kinase">
    <location>
        <begin position="1"/>
        <end position="180"/>
    </location>
</feature>
<feature type="active site" description="Nucleophile" evidence="1">
    <location>
        <position position="117"/>
    </location>
</feature>
<feature type="binding site" evidence="2">
    <location>
        <position position="40"/>
    </location>
    <ligand>
        <name>Mg(2+)</name>
        <dbReference type="ChEBI" id="CHEBI:18420"/>
    </ligand>
</feature>
<feature type="binding site" evidence="2">
    <location>
        <position position="42"/>
    </location>
    <ligand>
        <name>Mg(2+)</name>
        <dbReference type="ChEBI" id="CHEBI:18420"/>
    </ligand>
</feature>
<reference key="1">
    <citation type="journal article" date="2009" name="Nature">
        <title>Evolution of pathogenicity and sexual reproduction in eight Candida genomes.</title>
        <authorList>
            <person name="Butler G."/>
            <person name="Rasmussen M.D."/>
            <person name="Lin M.F."/>
            <person name="Santos M.A.S."/>
            <person name="Sakthikumar S."/>
            <person name="Munro C.A."/>
            <person name="Rheinbay E."/>
            <person name="Grabherr M."/>
            <person name="Forche A."/>
            <person name="Reedy J.L."/>
            <person name="Agrafioti I."/>
            <person name="Arnaud M.B."/>
            <person name="Bates S."/>
            <person name="Brown A.J.P."/>
            <person name="Brunke S."/>
            <person name="Costanzo M.C."/>
            <person name="Fitzpatrick D.A."/>
            <person name="de Groot P.W.J."/>
            <person name="Harris D."/>
            <person name="Hoyer L.L."/>
            <person name="Hube B."/>
            <person name="Klis F.M."/>
            <person name="Kodira C."/>
            <person name="Lennard N."/>
            <person name="Logue M.E."/>
            <person name="Martin R."/>
            <person name="Neiman A.M."/>
            <person name="Nikolaou E."/>
            <person name="Quail M.A."/>
            <person name="Quinn J."/>
            <person name="Santos M.C."/>
            <person name="Schmitzberger F.F."/>
            <person name="Sherlock G."/>
            <person name="Shah P."/>
            <person name="Silverstein K.A.T."/>
            <person name="Skrzypek M.S."/>
            <person name="Soll D."/>
            <person name="Staggs R."/>
            <person name="Stansfield I."/>
            <person name="Stumpf M.P.H."/>
            <person name="Sudbery P.E."/>
            <person name="Srikantha T."/>
            <person name="Zeng Q."/>
            <person name="Berman J."/>
            <person name="Berriman M."/>
            <person name="Heitman J."/>
            <person name="Gow N.A.R."/>
            <person name="Lorenz M.C."/>
            <person name="Birren B.W."/>
            <person name="Kellis M."/>
            <person name="Cuomo C.A."/>
        </authorList>
    </citation>
    <scope>NUCLEOTIDE SEQUENCE [LARGE SCALE GENOMIC DNA]</scope>
    <source>
        <strain>ATCC 6260 / CBS 566 / DSM 6381 / JCM 1539 / NBRC 10279 / NRRL Y-324</strain>
    </source>
</reference>
<protein>
    <recommendedName>
        <fullName>Riboflavin kinase</fullName>
        <ecNumber>2.7.1.26</ecNumber>
    </recommendedName>
    <alternativeName>
        <fullName>Flavin mononucleotide kinase 1</fullName>
    </alternativeName>
</protein>
<dbReference type="EC" id="2.7.1.26"/>
<dbReference type="EMBL" id="CH408155">
    <property type="protein sequence ID" value="EDK36186.2"/>
    <property type="molecule type" value="Genomic_DNA"/>
</dbReference>
<dbReference type="RefSeq" id="XP_001486907.1">
    <property type="nucleotide sequence ID" value="XM_001486857.1"/>
</dbReference>
<dbReference type="SMR" id="A5DAH9"/>
<dbReference type="FunCoup" id="A5DAH9">
    <property type="interactions" value="381"/>
</dbReference>
<dbReference type="STRING" id="294746.A5DAH9"/>
<dbReference type="GeneID" id="5129296"/>
<dbReference type="KEGG" id="pgu:PGUG_00284"/>
<dbReference type="VEuPathDB" id="FungiDB:PGUG_00284"/>
<dbReference type="eggNOG" id="KOG3110">
    <property type="taxonomic scope" value="Eukaryota"/>
</dbReference>
<dbReference type="HOGENOM" id="CLU_048437_3_2_1"/>
<dbReference type="InParanoid" id="A5DAH9"/>
<dbReference type="OMA" id="FDCEVAR"/>
<dbReference type="OrthoDB" id="276388at2759"/>
<dbReference type="UniPathway" id="UPA00276">
    <property type="reaction ID" value="UER00406"/>
</dbReference>
<dbReference type="Proteomes" id="UP000001997">
    <property type="component" value="Unassembled WGS sequence"/>
</dbReference>
<dbReference type="GO" id="GO:0005739">
    <property type="term" value="C:mitochondrion"/>
    <property type="evidence" value="ECO:0007669"/>
    <property type="project" value="TreeGrafter"/>
</dbReference>
<dbReference type="GO" id="GO:0005524">
    <property type="term" value="F:ATP binding"/>
    <property type="evidence" value="ECO:0007669"/>
    <property type="project" value="UniProtKB-KW"/>
</dbReference>
<dbReference type="GO" id="GO:0046872">
    <property type="term" value="F:metal ion binding"/>
    <property type="evidence" value="ECO:0007669"/>
    <property type="project" value="UniProtKB-KW"/>
</dbReference>
<dbReference type="GO" id="GO:0008531">
    <property type="term" value="F:riboflavin kinase activity"/>
    <property type="evidence" value="ECO:0007669"/>
    <property type="project" value="UniProtKB-EC"/>
</dbReference>
<dbReference type="GO" id="GO:0009398">
    <property type="term" value="P:FMN biosynthetic process"/>
    <property type="evidence" value="ECO:0007669"/>
    <property type="project" value="UniProtKB-UniPathway"/>
</dbReference>
<dbReference type="GO" id="GO:0009231">
    <property type="term" value="P:riboflavin biosynthetic process"/>
    <property type="evidence" value="ECO:0007669"/>
    <property type="project" value="InterPro"/>
</dbReference>
<dbReference type="Gene3D" id="2.40.30.30">
    <property type="entry name" value="Riboflavin kinase-like"/>
    <property type="match status" value="1"/>
</dbReference>
<dbReference type="InterPro" id="IPR023468">
    <property type="entry name" value="Riboflavin_kinase"/>
</dbReference>
<dbReference type="InterPro" id="IPR015865">
    <property type="entry name" value="Riboflavin_kinase_bac/euk"/>
</dbReference>
<dbReference type="InterPro" id="IPR023465">
    <property type="entry name" value="Riboflavin_kinase_dom_sf"/>
</dbReference>
<dbReference type="PANTHER" id="PTHR22749:SF6">
    <property type="entry name" value="RIBOFLAVIN KINASE"/>
    <property type="match status" value="1"/>
</dbReference>
<dbReference type="PANTHER" id="PTHR22749">
    <property type="entry name" value="RIBOFLAVIN KINASE/FMN ADENYLYLTRANSFERASE"/>
    <property type="match status" value="1"/>
</dbReference>
<dbReference type="Pfam" id="PF01687">
    <property type="entry name" value="Flavokinase"/>
    <property type="match status" value="1"/>
</dbReference>
<dbReference type="SMART" id="SM00904">
    <property type="entry name" value="Flavokinase"/>
    <property type="match status" value="1"/>
</dbReference>
<dbReference type="SUPFAM" id="SSF82114">
    <property type="entry name" value="Riboflavin kinase-like"/>
    <property type="match status" value="1"/>
</dbReference>